<sequence length="233" mass="26517">MSVISMKQLLEAGVHFGHQTRRWNPKMKRYIFTERNGIYIIDLQKTVKKVEEAFKVMRDIAAEGGDILFVGTKKQAQEAIKEEATRAGMYFVNQRWLGGTLTNFQTIQKRIKRLKDIERMQEDGTFEVLPKKEVVQLKKELERLEKFLGGIKDMKGLPSALFVVDPRKERIAVAEARKLHIPIIGIVDTNCDPDEIDHVIPANDDAIRAVKLLTSKMADAILEAKQGEETVTA</sequence>
<proteinExistence type="inferred from homology"/>
<accession>C3L7A0</accession>
<organism>
    <name type="scientific">Bacillus anthracis (strain CDC 684 / NRRL 3495)</name>
    <dbReference type="NCBI Taxonomy" id="568206"/>
    <lineage>
        <taxon>Bacteria</taxon>
        <taxon>Bacillati</taxon>
        <taxon>Bacillota</taxon>
        <taxon>Bacilli</taxon>
        <taxon>Bacillales</taxon>
        <taxon>Bacillaceae</taxon>
        <taxon>Bacillus</taxon>
        <taxon>Bacillus cereus group</taxon>
    </lineage>
</organism>
<gene>
    <name evidence="1" type="primary">rpsB</name>
    <name type="ordered locus">BAMEG_0667</name>
</gene>
<keyword id="KW-0687">Ribonucleoprotein</keyword>
<keyword id="KW-0689">Ribosomal protein</keyword>
<reference key="1">
    <citation type="submission" date="2008-10" db="EMBL/GenBank/DDBJ databases">
        <title>Genome sequence of Bacillus anthracis str. CDC 684.</title>
        <authorList>
            <person name="Dodson R.J."/>
            <person name="Munk A.C."/>
            <person name="Brettin T."/>
            <person name="Bruce D."/>
            <person name="Detter C."/>
            <person name="Tapia R."/>
            <person name="Han C."/>
            <person name="Sutton G."/>
            <person name="Sims D."/>
        </authorList>
    </citation>
    <scope>NUCLEOTIDE SEQUENCE [LARGE SCALE GENOMIC DNA]</scope>
    <source>
        <strain>CDC 684 / NRRL 3495</strain>
    </source>
</reference>
<dbReference type="EMBL" id="CP001215">
    <property type="protein sequence ID" value="ACP16225.1"/>
    <property type="molecule type" value="Genomic_DNA"/>
</dbReference>
<dbReference type="RefSeq" id="WP_000111483.1">
    <property type="nucleotide sequence ID" value="NC_012581.1"/>
</dbReference>
<dbReference type="SMR" id="C3L7A0"/>
<dbReference type="GeneID" id="75086962"/>
<dbReference type="KEGG" id="bah:BAMEG_0667"/>
<dbReference type="HOGENOM" id="CLU_040318_1_2_9"/>
<dbReference type="GO" id="GO:0022627">
    <property type="term" value="C:cytosolic small ribosomal subunit"/>
    <property type="evidence" value="ECO:0007669"/>
    <property type="project" value="TreeGrafter"/>
</dbReference>
<dbReference type="GO" id="GO:0003735">
    <property type="term" value="F:structural constituent of ribosome"/>
    <property type="evidence" value="ECO:0007669"/>
    <property type="project" value="InterPro"/>
</dbReference>
<dbReference type="GO" id="GO:0006412">
    <property type="term" value="P:translation"/>
    <property type="evidence" value="ECO:0007669"/>
    <property type="project" value="UniProtKB-UniRule"/>
</dbReference>
<dbReference type="CDD" id="cd01425">
    <property type="entry name" value="RPS2"/>
    <property type="match status" value="1"/>
</dbReference>
<dbReference type="FunFam" id="1.10.287.610:FF:000001">
    <property type="entry name" value="30S ribosomal protein S2"/>
    <property type="match status" value="1"/>
</dbReference>
<dbReference type="Gene3D" id="3.40.50.10490">
    <property type="entry name" value="Glucose-6-phosphate isomerase like protein, domain 1"/>
    <property type="match status" value="1"/>
</dbReference>
<dbReference type="Gene3D" id="1.10.287.610">
    <property type="entry name" value="Helix hairpin bin"/>
    <property type="match status" value="1"/>
</dbReference>
<dbReference type="HAMAP" id="MF_00291_B">
    <property type="entry name" value="Ribosomal_uS2_B"/>
    <property type="match status" value="1"/>
</dbReference>
<dbReference type="InterPro" id="IPR001865">
    <property type="entry name" value="Ribosomal_uS2"/>
</dbReference>
<dbReference type="InterPro" id="IPR005706">
    <property type="entry name" value="Ribosomal_uS2_bac/mit/plastid"/>
</dbReference>
<dbReference type="InterPro" id="IPR018130">
    <property type="entry name" value="Ribosomal_uS2_CS"/>
</dbReference>
<dbReference type="InterPro" id="IPR023591">
    <property type="entry name" value="Ribosomal_uS2_flav_dom_sf"/>
</dbReference>
<dbReference type="NCBIfam" id="TIGR01011">
    <property type="entry name" value="rpsB_bact"/>
    <property type="match status" value="1"/>
</dbReference>
<dbReference type="PANTHER" id="PTHR12534">
    <property type="entry name" value="30S RIBOSOMAL PROTEIN S2 PROKARYOTIC AND ORGANELLAR"/>
    <property type="match status" value="1"/>
</dbReference>
<dbReference type="PANTHER" id="PTHR12534:SF0">
    <property type="entry name" value="SMALL RIBOSOMAL SUBUNIT PROTEIN US2M"/>
    <property type="match status" value="1"/>
</dbReference>
<dbReference type="Pfam" id="PF00318">
    <property type="entry name" value="Ribosomal_S2"/>
    <property type="match status" value="1"/>
</dbReference>
<dbReference type="PRINTS" id="PR00395">
    <property type="entry name" value="RIBOSOMALS2"/>
</dbReference>
<dbReference type="SUPFAM" id="SSF52313">
    <property type="entry name" value="Ribosomal protein S2"/>
    <property type="match status" value="1"/>
</dbReference>
<dbReference type="PROSITE" id="PS00962">
    <property type="entry name" value="RIBOSOMAL_S2_1"/>
    <property type="match status" value="1"/>
</dbReference>
<dbReference type="PROSITE" id="PS00963">
    <property type="entry name" value="RIBOSOMAL_S2_2"/>
    <property type="match status" value="1"/>
</dbReference>
<name>RS2_BACAC</name>
<protein>
    <recommendedName>
        <fullName evidence="1">Small ribosomal subunit protein uS2</fullName>
    </recommendedName>
    <alternativeName>
        <fullName evidence="2">30S ribosomal protein S2</fullName>
    </alternativeName>
</protein>
<feature type="chain" id="PRO_1000194316" description="Small ribosomal subunit protein uS2">
    <location>
        <begin position="1"/>
        <end position="233"/>
    </location>
</feature>
<comment type="similarity">
    <text evidence="1">Belongs to the universal ribosomal protein uS2 family.</text>
</comment>
<evidence type="ECO:0000255" key="1">
    <source>
        <dbReference type="HAMAP-Rule" id="MF_00291"/>
    </source>
</evidence>
<evidence type="ECO:0000305" key="2"/>